<sequence length="548" mass="57431">MAAKDVKFGNDARIKMLRGVNILADAVKVTLGPKGRNVVLDKSFGSPTITKDGVSVAREIELEDKFENMGAQMVKEVASKANDAAGDGTTTATVLAQSIITEGLKAVAAGMNPMDLKRGIDKAVIAAVEELKKLSVPCSDSKAIAQVGTISANSDSTVGELIAQAMEKVGKEGVITVEEGSGLQDELDVVEGMQFDRGYLSPYFINKPETGSIELESPFILLADKKISNIREMLPVLEAVAKAGKPLLIIAEDVEGEALATLVVNTMRGIVKVAAVKAPGFGDRRKAMLQDIATLTAGTVISEEIGLELEKTTLEDLGQAKRVVINKDTTIIIDGVGDEAAIQGRVAQIRQQIEDATSDYDKEKLQERVAKLAGGVAVIKVGAATEVEMKEKKARVEDALHATRAAVEEGVVAGGGVALIRAAHAIAGLKGDNEDQNVGIKVALRAMESPLRQIVVNAGEEASVIANKVKAGEGSFGYNAYTEEYGDMIAMGILDPTKVTRSALQYAASIAGLMITTECMVTDLPRDDKGADMGAGGMGGMGGMGGMM</sequence>
<name>CH60_YERPE</name>
<gene>
    <name evidence="1" type="primary">groEL</name>
    <name evidence="1" type="synonym">groL</name>
    <name type="synonym">mopA</name>
    <name type="ordered locus">YPO0351</name>
    <name type="ordered locus">y0609</name>
    <name type="ordered locus">YP_0506</name>
</gene>
<feature type="chain" id="PRO_0000063615" description="Chaperonin GroEL">
    <location>
        <begin position="1"/>
        <end position="548"/>
    </location>
</feature>
<feature type="binding site" evidence="1">
    <location>
        <begin position="30"/>
        <end position="33"/>
    </location>
    <ligand>
        <name>ATP</name>
        <dbReference type="ChEBI" id="CHEBI:30616"/>
    </ligand>
</feature>
<feature type="binding site" evidence="1">
    <location>
        <position position="51"/>
    </location>
    <ligand>
        <name>ATP</name>
        <dbReference type="ChEBI" id="CHEBI:30616"/>
    </ligand>
</feature>
<feature type="binding site" evidence="1">
    <location>
        <begin position="87"/>
        <end position="91"/>
    </location>
    <ligand>
        <name>ATP</name>
        <dbReference type="ChEBI" id="CHEBI:30616"/>
    </ligand>
</feature>
<feature type="binding site" evidence="1">
    <location>
        <position position="415"/>
    </location>
    <ligand>
        <name>ATP</name>
        <dbReference type="ChEBI" id="CHEBI:30616"/>
    </ligand>
</feature>
<feature type="binding site" evidence="1">
    <location>
        <position position="495"/>
    </location>
    <ligand>
        <name>ATP</name>
        <dbReference type="ChEBI" id="CHEBI:30616"/>
    </ligand>
</feature>
<organism>
    <name type="scientific">Yersinia pestis</name>
    <dbReference type="NCBI Taxonomy" id="632"/>
    <lineage>
        <taxon>Bacteria</taxon>
        <taxon>Pseudomonadati</taxon>
        <taxon>Pseudomonadota</taxon>
        <taxon>Gammaproteobacteria</taxon>
        <taxon>Enterobacterales</taxon>
        <taxon>Yersiniaceae</taxon>
        <taxon>Yersinia</taxon>
    </lineage>
</organism>
<comment type="function">
    <text evidence="1">Together with its co-chaperonin GroES, plays an essential role in assisting protein folding. The GroEL-GroES system forms a nano-cage that allows encapsulation of the non-native substrate proteins and provides a physical environment optimized to promote and accelerate protein folding.</text>
</comment>
<comment type="catalytic activity">
    <reaction evidence="1">
        <text>ATP + H2O + a folded polypeptide = ADP + phosphate + an unfolded polypeptide.</text>
        <dbReference type="EC" id="5.6.1.7"/>
    </reaction>
</comment>
<comment type="subunit">
    <text evidence="1">Forms a cylinder of 14 subunits composed of two heptameric rings stacked back-to-back. Interacts with the co-chaperonin GroES.</text>
</comment>
<comment type="subcellular location">
    <subcellularLocation>
        <location evidence="1">Cytoplasm</location>
    </subcellularLocation>
</comment>
<comment type="similarity">
    <text evidence="1">Belongs to the chaperonin (HSP60) family.</text>
</comment>
<evidence type="ECO:0000255" key="1">
    <source>
        <dbReference type="HAMAP-Rule" id="MF_00600"/>
    </source>
</evidence>
<reference key="1">
    <citation type="journal article" date="2001" name="Nature">
        <title>Genome sequence of Yersinia pestis, the causative agent of plague.</title>
        <authorList>
            <person name="Parkhill J."/>
            <person name="Wren B.W."/>
            <person name="Thomson N.R."/>
            <person name="Titball R.W."/>
            <person name="Holden M.T.G."/>
            <person name="Prentice M.B."/>
            <person name="Sebaihia M."/>
            <person name="James K.D."/>
            <person name="Churcher C.M."/>
            <person name="Mungall K.L."/>
            <person name="Baker S."/>
            <person name="Basham D."/>
            <person name="Bentley S.D."/>
            <person name="Brooks K."/>
            <person name="Cerdeno-Tarraga A.-M."/>
            <person name="Chillingworth T."/>
            <person name="Cronin A."/>
            <person name="Davies R.M."/>
            <person name="Davis P."/>
            <person name="Dougan G."/>
            <person name="Feltwell T."/>
            <person name="Hamlin N."/>
            <person name="Holroyd S."/>
            <person name="Jagels K."/>
            <person name="Karlyshev A.V."/>
            <person name="Leather S."/>
            <person name="Moule S."/>
            <person name="Oyston P.C.F."/>
            <person name="Quail M.A."/>
            <person name="Rutherford K.M."/>
            <person name="Simmonds M."/>
            <person name="Skelton J."/>
            <person name="Stevens K."/>
            <person name="Whitehead S."/>
            <person name="Barrell B.G."/>
        </authorList>
    </citation>
    <scope>NUCLEOTIDE SEQUENCE [LARGE SCALE GENOMIC DNA]</scope>
    <source>
        <strain>CO-92 / Biovar Orientalis</strain>
    </source>
</reference>
<reference key="2">
    <citation type="journal article" date="2002" name="J. Bacteriol.">
        <title>Genome sequence of Yersinia pestis KIM.</title>
        <authorList>
            <person name="Deng W."/>
            <person name="Burland V."/>
            <person name="Plunkett G. III"/>
            <person name="Boutin A."/>
            <person name="Mayhew G.F."/>
            <person name="Liss P."/>
            <person name="Perna N.T."/>
            <person name="Rose D.J."/>
            <person name="Mau B."/>
            <person name="Zhou S."/>
            <person name="Schwartz D.C."/>
            <person name="Fetherston J.D."/>
            <person name="Lindler L.E."/>
            <person name="Brubaker R.R."/>
            <person name="Plano G.V."/>
            <person name="Straley S.C."/>
            <person name="McDonough K.A."/>
            <person name="Nilles M.L."/>
            <person name="Matson J.S."/>
            <person name="Blattner F.R."/>
            <person name="Perry R.D."/>
        </authorList>
    </citation>
    <scope>NUCLEOTIDE SEQUENCE [LARGE SCALE GENOMIC DNA]</scope>
    <source>
        <strain>KIM10+ / Biovar Mediaevalis</strain>
    </source>
</reference>
<reference key="3">
    <citation type="journal article" date="2004" name="DNA Res.">
        <title>Complete genome sequence of Yersinia pestis strain 91001, an isolate avirulent to humans.</title>
        <authorList>
            <person name="Song Y."/>
            <person name="Tong Z."/>
            <person name="Wang J."/>
            <person name="Wang L."/>
            <person name="Guo Z."/>
            <person name="Han Y."/>
            <person name="Zhang J."/>
            <person name="Pei D."/>
            <person name="Zhou D."/>
            <person name="Qin H."/>
            <person name="Pang X."/>
            <person name="Han Y."/>
            <person name="Zhai J."/>
            <person name="Li M."/>
            <person name="Cui B."/>
            <person name="Qi Z."/>
            <person name="Jin L."/>
            <person name="Dai R."/>
            <person name="Chen F."/>
            <person name="Li S."/>
            <person name="Ye C."/>
            <person name="Du Z."/>
            <person name="Lin W."/>
            <person name="Wang J."/>
            <person name="Yu J."/>
            <person name="Yang H."/>
            <person name="Wang J."/>
            <person name="Huang P."/>
            <person name="Yang R."/>
        </authorList>
    </citation>
    <scope>NUCLEOTIDE SEQUENCE [LARGE SCALE GENOMIC DNA]</scope>
    <source>
        <strain>91001 / Biovar Mediaevalis</strain>
    </source>
</reference>
<protein>
    <recommendedName>
        <fullName evidence="1">Chaperonin GroEL</fullName>
        <ecNumber evidence="1">5.6.1.7</ecNumber>
    </recommendedName>
    <alternativeName>
        <fullName evidence="1">60 kDa chaperonin</fullName>
    </alternativeName>
    <alternativeName>
        <fullName evidence="1">Chaperonin-60</fullName>
        <shortName evidence="1">Cpn60</shortName>
    </alternativeName>
</protein>
<keyword id="KW-0067">ATP-binding</keyword>
<keyword id="KW-0143">Chaperone</keyword>
<keyword id="KW-0963">Cytoplasm</keyword>
<keyword id="KW-0413">Isomerase</keyword>
<keyword id="KW-0547">Nucleotide-binding</keyword>
<keyword id="KW-1185">Reference proteome</keyword>
<accession>Q8ZIY3</accession>
<accession>Q0WJV9</accession>
<proteinExistence type="inferred from homology"/>
<dbReference type="EC" id="5.6.1.7" evidence="1"/>
<dbReference type="EMBL" id="AL590842">
    <property type="protein sequence ID" value="CAL19033.1"/>
    <property type="molecule type" value="Genomic_DNA"/>
</dbReference>
<dbReference type="EMBL" id="AE009952">
    <property type="protein sequence ID" value="AAM84197.1"/>
    <property type="molecule type" value="Genomic_DNA"/>
</dbReference>
<dbReference type="EMBL" id="AE017042">
    <property type="protein sequence ID" value="AAS60776.1"/>
    <property type="molecule type" value="Genomic_DNA"/>
</dbReference>
<dbReference type="PIR" id="AG0043">
    <property type="entry name" value="AG0043"/>
</dbReference>
<dbReference type="RefSeq" id="WP_002209128.1">
    <property type="nucleotide sequence ID" value="NZ_WUCM01000014.1"/>
</dbReference>
<dbReference type="RefSeq" id="YP_002345429.1">
    <property type="nucleotide sequence ID" value="NC_003143.1"/>
</dbReference>
<dbReference type="SMR" id="Q8ZIY3"/>
<dbReference type="IntAct" id="Q8ZIY3">
    <property type="interactions" value="7"/>
</dbReference>
<dbReference type="STRING" id="214092.YPO0351"/>
<dbReference type="PaxDb" id="214092-YPO0351"/>
<dbReference type="DNASU" id="1145556"/>
<dbReference type="EnsemblBacteria" id="AAS60776">
    <property type="protein sequence ID" value="AAS60776"/>
    <property type="gene ID" value="YP_0506"/>
</dbReference>
<dbReference type="GeneID" id="57974257"/>
<dbReference type="KEGG" id="ype:YPO0351"/>
<dbReference type="KEGG" id="ypk:y0609"/>
<dbReference type="KEGG" id="ypm:YP_0506"/>
<dbReference type="PATRIC" id="fig|214092.21.peg.587"/>
<dbReference type="eggNOG" id="COG0459">
    <property type="taxonomic scope" value="Bacteria"/>
</dbReference>
<dbReference type="HOGENOM" id="CLU_016503_3_0_6"/>
<dbReference type="OMA" id="TDTDKME"/>
<dbReference type="OrthoDB" id="9766614at2"/>
<dbReference type="Proteomes" id="UP000000815">
    <property type="component" value="Chromosome"/>
</dbReference>
<dbReference type="Proteomes" id="UP000001019">
    <property type="component" value="Chromosome"/>
</dbReference>
<dbReference type="Proteomes" id="UP000002490">
    <property type="component" value="Chromosome"/>
</dbReference>
<dbReference type="GO" id="GO:1990220">
    <property type="term" value="C:GroEL-GroES complex"/>
    <property type="evidence" value="ECO:0000318"/>
    <property type="project" value="GO_Central"/>
</dbReference>
<dbReference type="GO" id="GO:0005524">
    <property type="term" value="F:ATP binding"/>
    <property type="evidence" value="ECO:0000318"/>
    <property type="project" value="GO_Central"/>
</dbReference>
<dbReference type="GO" id="GO:0140662">
    <property type="term" value="F:ATP-dependent protein folding chaperone"/>
    <property type="evidence" value="ECO:0007669"/>
    <property type="project" value="InterPro"/>
</dbReference>
<dbReference type="GO" id="GO:0016853">
    <property type="term" value="F:isomerase activity"/>
    <property type="evidence" value="ECO:0007669"/>
    <property type="project" value="UniProtKB-KW"/>
</dbReference>
<dbReference type="GO" id="GO:0051082">
    <property type="term" value="F:unfolded protein binding"/>
    <property type="evidence" value="ECO:0000318"/>
    <property type="project" value="GO_Central"/>
</dbReference>
<dbReference type="GO" id="GO:0051085">
    <property type="term" value="P:chaperone cofactor-dependent protein refolding"/>
    <property type="evidence" value="ECO:0000318"/>
    <property type="project" value="GO_Central"/>
</dbReference>
<dbReference type="GO" id="GO:0042026">
    <property type="term" value="P:protein refolding"/>
    <property type="evidence" value="ECO:0007669"/>
    <property type="project" value="UniProtKB-UniRule"/>
</dbReference>
<dbReference type="GO" id="GO:0009408">
    <property type="term" value="P:response to heat"/>
    <property type="evidence" value="ECO:0000318"/>
    <property type="project" value="GO_Central"/>
</dbReference>
<dbReference type="CDD" id="cd03344">
    <property type="entry name" value="GroEL"/>
    <property type="match status" value="1"/>
</dbReference>
<dbReference type="FunFam" id="1.10.560.10:FF:000001">
    <property type="entry name" value="60 kDa chaperonin"/>
    <property type="match status" value="1"/>
</dbReference>
<dbReference type="FunFam" id="3.50.7.10:FF:000001">
    <property type="entry name" value="60 kDa chaperonin"/>
    <property type="match status" value="1"/>
</dbReference>
<dbReference type="Gene3D" id="3.50.7.10">
    <property type="entry name" value="GroEL"/>
    <property type="match status" value="1"/>
</dbReference>
<dbReference type="Gene3D" id="1.10.560.10">
    <property type="entry name" value="GroEL-like equatorial domain"/>
    <property type="match status" value="1"/>
</dbReference>
<dbReference type="Gene3D" id="3.30.260.10">
    <property type="entry name" value="TCP-1-like chaperonin intermediate domain"/>
    <property type="match status" value="1"/>
</dbReference>
<dbReference type="HAMAP" id="MF_00600">
    <property type="entry name" value="CH60"/>
    <property type="match status" value="1"/>
</dbReference>
<dbReference type="InterPro" id="IPR018370">
    <property type="entry name" value="Chaperonin_Cpn60_CS"/>
</dbReference>
<dbReference type="InterPro" id="IPR001844">
    <property type="entry name" value="Cpn60/GroEL"/>
</dbReference>
<dbReference type="InterPro" id="IPR002423">
    <property type="entry name" value="Cpn60/GroEL/TCP-1"/>
</dbReference>
<dbReference type="InterPro" id="IPR027409">
    <property type="entry name" value="GroEL-like_apical_dom_sf"/>
</dbReference>
<dbReference type="InterPro" id="IPR027413">
    <property type="entry name" value="GROEL-like_equatorial_sf"/>
</dbReference>
<dbReference type="InterPro" id="IPR027410">
    <property type="entry name" value="TCP-1-like_intermed_sf"/>
</dbReference>
<dbReference type="NCBIfam" id="TIGR02348">
    <property type="entry name" value="GroEL"/>
    <property type="match status" value="1"/>
</dbReference>
<dbReference type="NCBIfam" id="NF000592">
    <property type="entry name" value="PRK00013.1"/>
    <property type="match status" value="1"/>
</dbReference>
<dbReference type="NCBIfam" id="NF009487">
    <property type="entry name" value="PRK12849.1"/>
    <property type="match status" value="1"/>
</dbReference>
<dbReference type="NCBIfam" id="NF009488">
    <property type="entry name" value="PRK12850.1"/>
    <property type="match status" value="1"/>
</dbReference>
<dbReference type="NCBIfam" id="NF009489">
    <property type="entry name" value="PRK12851.1"/>
    <property type="match status" value="1"/>
</dbReference>
<dbReference type="PANTHER" id="PTHR45633">
    <property type="entry name" value="60 KDA HEAT SHOCK PROTEIN, MITOCHONDRIAL"/>
    <property type="match status" value="1"/>
</dbReference>
<dbReference type="Pfam" id="PF00118">
    <property type="entry name" value="Cpn60_TCP1"/>
    <property type="match status" value="1"/>
</dbReference>
<dbReference type="PRINTS" id="PR00298">
    <property type="entry name" value="CHAPERONIN60"/>
</dbReference>
<dbReference type="SUPFAM" id="SSF52029">
    <property type="entry name" value="GroEL apical domain-like"/>
    <property type="match status" value="1"/>
</dbReference>
<dbReference type="SUPFAM" id="SSF48592">
    <property type="entry name" value="GroEL equatorial domain-like"/>
    <property type="match status" value="1"/>
</dbReference>
<dbReference type="SUPFAM" id="SSF54849">
    <property type="entry name" value="GroEL-intermediate domain like"/>
    <property type="match status" value="1"/>
</dbReference>
<dbReference type="PROSITE" id="PS00296">
    <property type="entry name" value="CHAPERONINS_CPN60"/>
    <property type="match status" value="1"/>
</dbReference>